<sequence>MDLRSALEKTNIIKSYKLHFLIRYTTSRFEVKEPFLAYLHMARQKDKLLPKCITPPNKKADPFTNDVSSYFTHTHTHTPCSPSLVYTYVNTTEKSPSKSPKHKNILPFNFTK</sequence>
<proteinExistence type="uncertain"/>
<gene>
    <name type="ordered locus">YEL074W</name>
</gene>
<accession>P39973</accession>
<evidence type="ECO:0000256" key="1">
    <source>
        <dbReference type="SAM" id="MobiDB-lite"/>
    </source>
</evidence>
<evidence type="ECO:0000305" key="2"/>
<evidence type="ECO:0000305" key="3">
    <source>
    </source>
</evidence>
<name>YEI4_YEAST</name>
<reference key="1">
    <citation type="journal article" date="1997" name="Nature">
        <title>The nucleotide sequence of Saccharomyces cerevisiae chromosome V.</title>
        <authorList>
            <person name="Dietrich F.S."/>
            <person name="Mulligan J.T."/>
            <person name="Hennessy K.M."/>
            <person name="Yelton M.A."/>
            <person name="Allen E."/>
            <person name="Araujo R."/>
            <person name="Aviles E."/>
            <person name="Berno A."/>
            <person name="Brennan T."/>
            <person name="Carpenter J."/>
            <person name="Chen E."/>
            <person name="Cherry J.M."/>
            <person name="Chung E."/>
            <person name="Duncan M."/>
            <person name="Guzman E."/>
            <person name="Hartzell G."/>
            <person name="Hunicke-Smith S."/>
            <person name="Hyman R.W."/>
            <person name="Kayser A."/>
            <person name="Komp C."/>
            <person name="Lashkari D."/>
            <person name="Lew H."/>
            <person name="Lin D."/>
            <person name="Mosedale D."/>
            <person name="Nakahara K."/>
            <person name="Namath A."/>
            <person name="Norgren R."/>
            <person name="Oefner P."/>
            <person name="Oh C."/>
            <person name="Petel F.X."/>
            <person name="Roberts D."/>
            <person name="Sehl P."/>
            <person name="Schramm S."/>
            <person name="Shogren T."/>
            <person name="Smith V."/>
            <person name="Taylor P."/>
            <person name="Wei Y."/>
            <person name="Botstein D."/>
            <person name="Davis R.W."/>
        </authorList>
    </citation>
    <scope>NUCLEOTIDE SEQUENCE [LARGE SCALE GENOMIC DNA]</scope>
    <source>
        <strain>ATCC 204508 / S288c</strain>
    </source>
</reference>
<reference key="2">
    <citation type="journal article" date="2014" name="G3 (Bethesda)">
        <title>The reference genome sequence of Saccharomyces cerevisiae: Then and now.</title>
        <authorList>
            <person name="Engel S.R."/>
            <person name="Dietrich F.S."/>
            <person name="Fisk D.G."/>
            <person name="Binkley G."/>
            <person name="Balakrishnan R."/>
            <person name="Costanzo M.C."/>
            <person name="Dwight S.S."/>
            <person name="Hitz B.C."/>
            <person name="Karra K."/>
            <person name="Nash R.S."/>
            <person name="Weng S."/>
            <person name="Wong E.D."/>
            <person name="Lloyd P."/>
            <person name="Skrzypek M.S."/>
            <person name="Miyasato S.R."/>
            <person name="Simison M."/>
            <person name="Cherry J.M."/>
        </authorList>
    </citation>
    <scope>GENOME REANNOTATION</scope>
    <source>
        <strain>ATCC 204508 / S288c</strain>
    </source>
</reference>
<reference key="3">
    <citation type="journal article" date="2007" name="Genome Res.">
        <title>Approaching a complete repository of sequence-verified protein-encoding clones for Saccharomyces cerevisiae.</title>
        <authorList>
            <person name="Hu Y."/>
            <person name="Rolfs A."/>
            <person name="Bhullar B."/>
            <person name="Murthy T.V.S."/>
            <person name="Zhu C."/>
            <person name="Berger M.F."/>
            <person name="Camargo A.A."/>
            <person name="Kelley F."/>
            <person name="McCarron S."/>
            <person name="Jepson D."/>
            <person name="Richardson A."/>
            <person name="Raphael J."/>
            <person name="Moreira D."/>
            <person name="Taycher E."/>
            <person name="Zuo D."/>
            <person name="Mohr S."/>
            <person name="Kane M.F."/>
            <person name="Williamson J."/>
            <person name="Simpson A.J.G."/>
            <person name="Bulyk M.L."/>
            <person name="Harlow E."/>
            <person name="Marsischky G."/>
            <person name="Kolodner R.D."/>
            <person name="LaBaer J."/>
        </authorList>
    </citation>
    <scope>NUCLEOTIDE SEQUENCE [GENOMIC DNA]</scope>
    <source>
        <strain>ATCC 204508 / S288c</strain>
    </source>
</reference>
<comment type="miscellaneous">
    <text evidence="2">Contained within a telomeric X element core sequence.</text>
</comment>
<comment type="similarity">
    <text evidence="2">Belongs to the UPF0320 family.</text>
</comment>
<comment type="caution">
    <text evidence="3">Product of a dubious gene prediction unlikely to encode a functional protein. Because of that it is not part of the S.cerevisiae S288c complete/reference proteome set.</text>
</comment>
<feature type="chain" id="PRO_0000211370" description="Putative UPF0320 protein YEL074W">
    <location>
        <begin position="1"/>
        <end position="112"/>
    </location>
</feature>
<feature type="region of interest" description="Disordered" evidence="1">
    <location>
        <begin position="93"/>
        <end position="112"/>
    </location>
</feature>
<dbReference type="EMBL" id="U18795">
    <property type="protein sequence ID" value="AAB65013.1"/>
    <property type="molecule type" value="Genomic_DNA"/>
</dbReference>
<dbReference type="EMBL" id="AY558447">
    <property type="protein sequence ID" value="AAS56773.1"/>
    <property type="molecule type" value="Genomic_DNA"/>
</dbReference>
<dbReference type="PIR" id="S50515">
    <property type="entry name" value="S50515"/>
</dbReference>
<dbReference type="DIP" id="DIP-4881N"/>
<dbReference type="STRING" id="4932.YEL074W"/>
<dbReference type="PaxDb" id="4932-YEL074W"/>
<dbReference type="EnsemblFungi" id="YEL074W_mRNA">
    <property type="protein sequence ID" value="YEL074W"/>
    <property type="gene ID" value="YEL074W"/>
</dbReference>
<dbReference type="AGR" id="SGD:S000000800"/>
<dbReference type="SGD" id="S000000800">
    <property type="gene designation" value="YEL074W"/>
</dbReference>
<dbReference type="HOGENOM" id="CLU_2147831_0_0_1"/>
<dbReference type="InterPro" id="IPR007414">
    <property type="entry name" value="DUF468"/>
</dbReference>
<dbReference type="Pfam" id="PF04318">
    <property type="entry name" value="DUF468"/>
    <property type="match status" value="1"/>
</dbReference>
<protein>
    <recommendedName>
        <fullName>Putative UPF0320 protein YEL074W</fullName>
    </recommendedName>
</protein>
<organism>
    <name type="scientific">Saccharomyces cerevisiae (strain ATCC 204508 / S288c)</name>
    <name type="common">Baker's yeast</name>
    <dbReference type="NCBI Taxonomy" id="559292"/>
    <lineage>
        <taxon>Eukaryota</taxon>
        <taxon>Fungi</taxon>
        <taxon>Dikarya</taxon>
        <taxon>Ascomycota</taxon>
        <taxon>Saccharomycotina</taxon>
        <taxon>Saccharomycetes</taxon>
        <taxon>Saccharomycetales</taxon>
        <taxon>Saccharomycetaceae</taxon>
        <taxon>Saccharomyces</taxon>
    </lineage>
</organism>